<name>UREG_RHOP5</name>
<proteinExistence type="inferred from homology"/>
<comment type="function">
    <text evidence="1">Facilitates the functional incorporation of the urease nickel metallocenter. This process requires GTP hydrolysis, probably effectuated by UreG.</text>
</comment>
<comment type="subunit">
    <text evidence="1">Homodimer. UreD, UreF and UreG form a complex that acts as a GTP-hydrolysis-dependent molecular chaperone, activating the urease apoprotein by helping to assemble the nickel containing metallocenter of UreC. The UreE protein probably delivers the nickel.</text>
</comment>
<comment type="subcellular location">
    <subcellularLocation>
        <location evidence="1">Cytoplasm</location>
    </subcellularLocation>
</comment>
<comment type="similarity">
    <text evidence="1">Belongs to the SIMIBI class G3E GTPase family. UreG subfamily.</text>
</comment>
<feature type="chain" id="PRO_0000347443" description="Urease accessory protein UreG">
    <location>
        <begin position="1"/>
        <end position="210"/>
    </location>
</feature>
<feature type="binding site" evidence="1">
    <location>
        <begin position="14"/>
        <end position="21"/>
    </location>
    <ligand>
        <name>GTP</name>
        <dbReference type="ChEBI" id="CHEBI:37565"/>
    </ligand>
</feature>
<gene>
    <name evidence="1" type="primary">ureG</name>
    <name type="ordered locus">RPE_1747</name>
</gene>
<organism>
    <name type="scientific">Rhodopseudomonas palustris (strain BisA53)</name>
    <dbReference type="NCBI Taxonomy" id="316055"/>
    <lineage>
        <taxon>Bacteria</taxon>
        <taxon>Pseudomonadati</taxon>
        <taxon>Pseudomonadota</taxon>
        <taxon>Alphaproteobacteria</taxon>
        <taxon>Hyphomicrobiales</taxon>
        <taxon>Nitrobacteraceae</taxon>
        <taxon>Rhodopseudomonas</taxon>
    </lineage>
</organism>
<dbReference type="EMBL" id="CP000463">
    <property type="protein sequence ID" value="ABJ05695.1"/>
    <property type="molecule type" value="Genomic_DNA"/>
</dbReference>
<dbReference type="SMR" id="Q07QT9"/>
<dbReference type="STRING" id="316055.RPE_1747"/>
<dbReference type="KEGG" id="rpe:RPE_1747"/>
<dbReference type="eggNOG" id="COG0378">
    <property type="taxonomic scope" value="Bacteria"/>
</dbReference>
<dbReference type="HOGENOM" id="CLU_072144_1_0_5"/>
<dbReference type="OrthoDB" id="9802035at2"/>
<dbReference type="GO" id="GO:0005737">
    <property type="term" value="C:cytoplasm"/>
    <property type="evidence" value="ECO:0007669"/>
    <property type="project" value="UniProtKB-SubCell"/>
</dbReference>
<dbReference type="GO" id="GO:0005525">
    <property type="term" value="F:GTP binding"/>
    <property type="evidence" value="ECO:0007669"/>
    <property type="project" value="UniProtKB-KW"/>
</dbReference>
<dbReference type="GO" id="GO:0003924">
    <property type="term" value="F:GTPase activity"/>
    <property type="evidence" value="ECO:0007669"/>
    <property type="project" value="InterPro"/>
</dbReference>
<dbReference type="GO" id="GO:0016151">
    <property type="term" value="F:nickel cation binding"/>
    <property type="evidence" value="ECO:0007669"/>
    <property type="project" value="UniProtKB-UniRule"/>
</dbReference>
<dbReference type="GO" id="GO:0043419">
    <property type="term" value="P:urea catabolic process"/>
    <property type="evidence" value="ECO:0007669"/>
    <property type="project" value="InterPro"/>
</dbReference>
<dbReference type="CDD" id="cd05540">
    <property type="entry name" value="UreG"/>
    <property type="match status" value="1"/>
</dbReference>
<dbReference type="FunFam" id="3.40.50.300:FF:000208">
    <property type="entry name" value="Urease accessory protein UreG"/>
    <property type="match status" value="1"/>
</dbReference>
<dbReference type="Gene3D" id="3.40.50.300">
    <property type="entry name" value="P-loop containing nucleotide triphosphate hydrolases"/>
    <property type="match status" value="1"/>
</dbReference>
<dbReference type="HAMAP" id="MF_01389">
    <property type="entry name" value="UreG"/>
    <property type="match status" value="1"/>
</dbReference>
<dbReference type="InterPro" id="IPR003495">
    <property type="entry name" value="CobW/HypB/UreG_nucleotide-bd"/>
</dbReference>
<dbReference type="InterPro" id="IPR027417">
    <property type="entry name" value="P-loop_NTPase"/>
</dbReference>
<dbReference type="InterPro" id="IPR004400">
    <property type="entry name" value="UreG"/>
</dbReference>
<dbReference type="NCBIfam" id="TIGR00101">
    <property type="entry name" value="ureG"/>
    <property type="match status" value="1"/>
</dbReference>
<dbReference type="PANTHER" id="PTHR31715">
    <property type="entry name" value="UREASE ACCESSORY PROTEIN G"/>
    <property type="match status" value="1"/>
</dbReference>
<dbReference type="PANTHER" id="PTHR31715:SF0">
    <property type="entry name" value="UREASE ACCESSORY PROTEIN G"/>
    <property type="match status" value="1"/>
</dbReference>
<dbReference type="Pfam" id="PF02492">
    <property type="entry name" value="cobW"/>
    <property type="match status" value="1"/>
</dbReference>
<dbReference type="PIRSF" id="PIRSF005624">
    <property type="entry name" value="Ni-bind_GTPase"/>
    <property type="match status" value="1"/>
</dbReference>
<dbReference type="SUPFAM" id="SSF52540">
    <property type="entry name" value="P-loop containing nucleoside triphosphate hydrolases"/>
    <property type="match status" value="1"/>
</dbReference>
<sequence>MARYNGPLRVGIGGPVGSGKTALMDLLCKELRERYQIAAITNDIYTKWDAEFLVRSGSLTPDRIVGVETGGCPHTAIREDASMNLAAVADMRAKFPDLDLVLIESGGDNLAATFSPELADLTIYVIDVAAGDKIPSKGGPGITRSDLLVINKIDLAPYVGASLAKMEVDAKRMRGERPFVMTNLKQSAGLDRIIAFLEAKGGLQAEPVDA</sequence>
<keyword id="KW-0143">Chaperone</keyword>
<keyword id="KW-0963">Cytoplasm</keyword>
<keyword id="KW-0342">GTP-binding</keyword>
<keyword id="KW-0996">Nickel insertion</keyword>
<keyword id="KW-0547">Nucleotide-binding</keyword>
<reference key="1">
    <citation type="submission" date="2006-09" db="EMBL/GenBank/DDBJ databases">
        <title>Complete sequence of Rhodopseudomonas palustris BisA53.</title>
        <authorList>
            <consortium name="US DOE Joint Genome Institute"/>
            <person name="Copeland A."/>
            <person name="Lucas S."/>
            <person name="Lapidus A."/>
            <person name="Barry K."/>
            <person name="Detter J.C."/>
            <person name="Glavina del Rio T."/>
            <person name="Hammon N."/>
            <person name="Israni S."/>
            <person name="Dalin E."/>
            <person name="Tice H."/>
            <person name="Pitluck S."/>
            <person name="Chain P."/>
            <person name="Malfatti S."/>
            <person name="Shin M."/>
            <person name="Vergez L."/>
            <person name="Schmutz J."/>
            <person name="Larimer F."/>
            <person name="Land M."/>
            <person name="Hauser L."/>
            <person name="Pelletier D.A."/>
            <person name="Kyrpides N."/>
            <person name="Kim E."/>
            <person name="Harwood C.S."/>
            <person name="Oda Y."/>
            <person name="Richardson P."/>
        </authorList>
    </citation>
    <scope>NUCLEOTIDE SEQUENCE [LARGE SCALE GENOMIC DNA]</scope>
    <source>
        <strain>BisA53</strain>
    </source>
</reference>
<protein>
    <recommendedName>
        <fullName evidence="1">Urease accessory protein UreG</fullName>
    </recommendedName>
</protein>
<accession>Q07QT9</accession>
<evidence type="ECO:0000255" key="1">
    <source>
        <dbReference type="HAMAP-Rule" id="MF_01389"/>
    </source>
</evidence>